<dbReference type="EC" id="3.5.4.28" evidence="1"/>
<dbReference type="EC" id="3.5.4.31" evidence="1"/>
<dbReference type="EMBL" id="AE016879">
    <property type="protein sequence ID" value="AAP25768.1"/>
    <property type="molecule type" value="Genomic_DNA"/>
</dbReference>
<dbReference type="EMBL" id="AE017334">
    <property type="protein sequence ID" value="AAT30980.2"/>
    <property type="molecule type" value="Genomic_DNA"/>
</dbReference>
<dbReference type="EMBL" id="AE017225">
    <property type="protein sequence ID" value="AAT54045.1"/>
    <property type="molecule type" value="Genomic_DNA"/>
</dbReference>
<dbReference type="RefSeq" id="NP_844282.1">
    <property type="nucleotide sequence ID" value="NC_003997.3"/>
</dbReference>
<dbReference type="RefSeq" id="YP_027994.1">
    <property type="nucleotide sequence ID" value="NC_005945.1"/>
</dbReference>
<dbReference type="SMR" id="Q81S14"/>
<dbReference type="IntAct" id="Q81S14">
    <property type="interactions" value="22"/>
</dbReference>
<dbReference type="STRING" id="261594.GBAA_1865"/>
<dbReference type="DNASU" id="1087118"/>
<dbReference type="KEGG" id="ban:BA_1865"/>
<dbReference type="KEGG" id="bar:GBAA_1865"/>
<dbReference type="KEGG" id="bat:BAS1729"/>
<dbReference type="PATRIC" id="fig|198094.11.peg.1835"/>
<dbReference type="eggNOG" id="COG0402">
    <property type="taxonomic scope" value="Bacteria"/>
</dbReference>
<dbReference type="HOGENOM" id="CLU_012358_2_0_9"/>
<dbReference type="OMA" id="CVHMNDS"/>
<dbReference type="Proteomes" id="UP000000427">
    <property type="component" value="Chromosome"/>
</dbReference>
<dbReference type="Proteomes" id="UP000000594">
    <property type="component" value="Chromosome"/>
</dbReference>
<dbReference type="GO" id="GO:0090614">
    <property type="term" value="F:5'-methylthioadenosine deaminase activity"/>
    <property type="evidence" value="ECO:0007669"/>
    <property type="project" value="UniProtKB-UniRule"/>
</dbReference>
<dbReference type="GO" id="GO:0046872">
    <property type="term" value="F:metal ion binding"/>
    <property type="evidence" value="ECO:0007669"/>
    <property type="project" value="UniProtKB-KW"/>
</dbReference>
<dbReference type="GO" id="GO:0050270">
    <property type="term" value="F:S-adenosylhomocysteine deaminase activity"/>
    <property type="evidence" value="ECO:0007669"/>
    <property type="project" value="UniProtKB-UniRule"/>
</dbReference>
<dbReference type="CDD" id="cd01298">
    <property type="entry name" value="ATZ_TRZ_like"/>
    <property type="match status" value="1"/>
</dbReference>
<dbReference type="FunFam" id="3.20.20.140:FF:000014">
    <property type="entry name" value="5-methylthioadenosine/S-adenosylhomocysteine deaminase"/>
    <property type="match status" value="1"/>
</dbReference>
<dbReference type="Gene3D" id="3.20.20.140">
    <property type="entry name" value="Metal-dependent hydrolases"/>
    <property type="match status" value="1"/>
</dbReference>
<dbReference type="Gene3D" id="2.30.40.10">
    <property type="entry name" value="Urease, subunit C, domain 1"/>
    <property type="match status" value="1"/>
</dbReference>
<dbReference type="HAMAP" id="MF_01281">
    <property type="entry name" value="MTA_SAH_deamin"/>
    <property type="match status" value="1"/>
</dbReference>
<dbReference type="InterPro" id="IPR006680">
    <property type="entry name" value="Amidohydro-rel"/>
</dbReference>
<dbReference type="InterPro" id="IPR023512">
    <property type="entry name" value="Deaminase_MtaD/DadD"/>
</dbReference>
<dbReference type="InterPro" id="IPR011059">
    <property type="entry name" value="Metal-dep_hydrolase_composite"/>
</dbReference>
<dbReference type="InterPro" id="IPR032466">
    <property type="entry name" value="Metal_Hydrolase"/>
</dbReference>
<dbReference type="InterPro" id="IPR050287">
    <property type="entry name" value="MTA/SAH_deaminase"/>
</dbReference>
<dbReference type="NCBIfam" id="NF012037">
    <property type="entry name" value="PRK15493.1"/>
    <property type="match status" value="1"/>
</dbReference>
<dbReference type="PANTHER" id="PTHR43794:SF11">
    <property type="entry name" value="AMIDOHYDROLASE-RELATED DOMAIN-CONTAINING PROTEIN"/>
    <property type="match status" value="1"/>
</dbReference>
<dbReference type="PANTHER" id="PTHR43794">
    <property type="entry name" value="AMINOHYDROLASE SSNA-RELATED"/>
    <property type="match status" value="1"/>
</dbReference>
<dbReference type="Pfam" id="PF01979">
    <property type="entry name" value="Amidohydro_1"/>
    <property type="match status" value="1"/>
</dbReference>
<dbReference type="SUPFAM" id="SSF51338">
    <property type="entry name" value="Composite domain of metallo-dependent hydrolases"/>
    <property type="match status" value="1"/>
</dbReference>
<dbReference type="SUPFAM" id="SSF51556">
    <property type="entry name" value="Metallo-dependent hydrolases"/>
    <property type="match status" value="1"/>
</dbReference>
<feature type="chain" id="PRO_0000312442" description="5-methylthioadenosine/S-adenosylhomocysteine deaminase">
    <location>
        <begin position="1"/>
        <end position="435"/>
    </location>
</feature>
<feature type="binding site" evidence="1">
    <location>
        <position position="65"/>
    </location>
    <ligand>
        <name>Zn(2+)</name>
        <dbReference type="ChEBI" id="CHEBI:29105"/>
    </ligand>
</feature>
<feature type="binding site" evidence="1">
    <location>
        <position position="67"/>
    </location>
    <ligand>
        <name>Zn(2+)</name>
        <dbReference type="ChEBI" id="CHEBI:29105"/>
    </ligand>
</feature>
<feature type="binding site" evidence="1">
    <location>
        <position position="94"/>
    </location>
    <ligand>
        <name>substrate</name>
    </ligand>
</feature>
<feature type="binding site" evidence="1">
    <location>
        <position position="150"/>
    </location>
    <ligand>
        <name>substrate</name>
    </ligand>
</feature>
<feature type="binding site" evidence="1">
    <location>
        <position position="189"/>
    </location>
    <ligand>
        <name>substrate</name>
    </ligand>
</feature>
<feature type="binding site" evidence="1">
    <location>
        <position position="216"/>
    </location>
    <ligand>
        <name>Zn(2+)</name>
        <dbReference type="ChEBI" id="CHEBI:29105"/>
    </ligand>
</feature>
<feature type="binding site" evidence="1">
    <location>
        <position position="219"/>
    </location>
    <ligand>
        <name>substrate</name>
    </ligand>
</feature>
<feature type="binding site" evidence="1">
    <location>
        <position position="304"/>
    </location>
    <ligand>
        <name>substrate</name>
    </ligand>
</feature>
<feature type="binding site" evidence="1">
    <location>
        <position position="304"/>
    </location>
    <ligand>
        <name>Zn(2+)</name>
        <dbReference type="ChEBI" id="CHEBI:29105"/>
    </ligand>
</feature>
<name>MTAD_BACAN</name>
<organism>
    <name type="scientific">Bacillus anthracis</name>
    <dbReference type="NCBI Taxonomy" id="1392"/>
    <lineage>
        <taxon>Bacteria</taxon>
        <taxon>Bacillati</taxon>
        <taxon>Bacillota</taxon>
        <taxon>Bacilli</taxon>
        <taxon>Bacillales</taxon>
        <taxon>Bacillaceae</taxon>
        <taxon>Bacillus</taxon>
        <taxon>Bacillus cereus group</taxon>
    </lineage>
</organism>
<comment type="function">
    <text evidence="1">Catalyzes the deamination of 5-methylthioadenosine and S-adenosyl-L-homocysteine into 5-methylthioinosine and S-inosyl-L-homocysteine, respectively. Is also able to deaminate adenosine.</text>
</comment>
<comment type="catalytic activity">
    <reaction evidence="1">
        <text>S-adenosyl-L-homocysteine + H2O + H(+) = S-inosyl-L-homocysteine + NH4(+)</text>
        <dbReference type="Rhea" id="RHEA:20716"/>
        <dbReference type="ChEBI" id="CHEBI:15377"/>
        <dbReference type="ChEBI" id="CHEBI:15378"/>
        <dbReference type="ChEBI" id="CHEBI:28938"/>
        <dbReference type="ChEBI" id="CHEBI:57856"/>
        <dbReference type="ChEBI" id="CHEBI:57985"/>
        <dbReference type="EC" id="3.5.4.28"/>
    </reaction>
</comment>
<comment type="catalytic activity">
    <reaction evidence="1">
        <text>S-methyl-5'-thioadenosine + H2O + H(+) = S-methyl-5'-thioinosine + NH4(+)</text>
        <dbReference type="Rhea" id="RHEA:25025"/>
        <dbReference type="ChEBI" id="CHEBI:15377"/>
        <dbReference type="ChEBI" id="CHEBI:15378"/>
        <dbReference type="ChEBI" id="CHEBI:17509"/>
        <dbReference type="ChEBI" id="CHEBI:28938"/>
        <dbReference type="ChEBI" id="CHEBI:48595"/>
        <dbReference type="EC" id="3.5.4.31"/>
    </reaction>
</comment>
<comment type="cofactor">
    <cofactor evidence="1">
        <name>Zn(2+)</name>
        <dbReference type="ChEBI" id="CHEBI:29105"/>
    </cofactor>
    <text evidence="1">Binds 1 zinc ion per subunit.</text>
</comment>
<comment type="similarity">
    <text evidence="1">Belongs to the metallo-dependent hydrolases superfamily. MTA/SAH deaminase family.</text>
</comment>
<protein>
    <recommendedName>
        <fullName evidence="1">5-methylthioadenosine/S-adenosylhomocysteine deaminase</fullName>
        <shortName evidence="1">MTA/SAH deaminase</shortName>
        <ecNumber evidence="1">3.5.4.28</ecNumber>
        <ecNumber evidence="1">3.5.4.31</ecNumber>
    </recommendedName>
</protein>
<gene>
    <name evidence="1" type="primary">mtaD</name>
    <name type="ordered locus">BA_1865</name>
    <name type="ordered locus">GBAA_1865</name>
    <name type="ordered locus">BAS1729</name>
</gene>
<proteinExistence type="inferred from homology"/>
<sequence>MKTTYVNATIVTMNEQNEVIENGYIIVENDKIIDVNSGEFASDFEVDEVIDMKGKWVLPGLVNTHTHVVMSLLRGIGDDMLLQPWLETRIWPLESQFTPELAVASTELGLLEMVKSGTTSFSDMFNPIGVDQDAIMETVSRSGMRAAVSRTLFSFGTQEDEKKAIEEAEKYVKRYYNESGMLTTMVAPHSPYTCSTELLEECARIAVENQTMVHIHLSETEREVRDIEAQYGKRPVEYVASCGLFKRPTVIAHGVVLNDNERAFLAEHDVRVAHNPNSNLKLGSGIANVKAMLEAGMKVGIATDSVASNNNLDMFEEMRIATLLQKGIHQDATALPVETALTLATKGAAEVIGMKQTGSLEVGKCADFITIDPSNKPHLQPADEVLSHLVYAASGKDISDVIINGKRVVWNGECKTLDEERIIFEASRYKRGLQR</sequence>
<keyword id="KW-0378">Hydrolase</keyword>
<keyword id="KW-0479">Metal-binding</keyword>
<keyword id="KW-1185">Reference proteome</keyword>
<keyword id="KW-0862">Zinc</keyword>
<accession>Q81S14</accession>
<accession>Q6I094</accession>
<accession>Q6KU68</accession>
<reference key="1">
    <citation type="journal article" date="2003" name="Nature">
        <title>The genome sequence of Bacillus anthracis Ames and comparison to closely related bacteria.</title>
        <authorList>
            <person name="Read T.D."/>
            <person name="Peterson S.N."/>
            <person name="Tourasse N.J."/>
            <person name="Baillie L.W."/>
            <person name="Paulsen I.T."/>
            <person name="Nelson K.E."/>
            <person name="Tettelin H."/>
            <person name="Fouts D.E."/>
            <person name="Eisen J.A."/>
            <person name="Gill S.R."/>
            <person name="Holtzapple E.K."/>
            <person name="Okstad O.A."/>
            <person name="Helgason E."/>
            <person name="Rilstone J."/>
            <person name="Wu M."/>
            <person name="Kolonay J.F."/>
            <person name="Beanan M.J."/>
            <person name="Dodson R.J."/>
            <person name="Brinkac L.M."/>
            <person name="Gwinn M.L."/>
            <person name="DeBoy R.T."/>
            <person name="Madpu R."/>
            <person name="Daugherty S.C."/>
            <person name="Durkin A.S."/>
            <person name="Haft D.H."/>
            <person name="Nelson W.C."/>
            <person name="Peterson J.D."/>
            <person name="Pop M."/>
            <person name="Khouri H.M."/>
            <person name="Radune D."/>
            <person name="Benton J.L."/>
            <person name="Mahamoud Y."/>
            <person name="Jiang L."/>
            <person name="Hance I.R."/>
            <person name="Weidman J.F."/>
            <person name="Berry K.J."/>
            <person name="Plaut R.D."/>
            <person name="Wolf A.M."/>
            <person name="Watkins K.L."/>
            <person name="Nierman W.C."/>
            <person name="Hazen A."/>
            <person name="Cline R.T."/>
            <person name="Redmond C."/>
            <person name="Thwaite J.E."/>
            <person name="White O."/>
            <person name="Salzberg S.L."/>
            <person name="Thomason B."/>
            <person name="Friedlander A.M."/>
            <person name="Koehler T.M."/>
            <person name="Hanna P.C."/>
            <person name="Kolstoe A.-B."/>
            <person name="Fraser C.M."/>
        </authorList>
    </citation>
    <scope>NUCLEOTIDE SEQUENCE [LARGE SCALE GENOMIC DNA]</scope>
    <source>
        <strain>Ames / isolate Porton</strain>
    </source>
</reference>
<reference key="2">
    <citation type="submission" date="2004-01" db="EMBL/GenBank/DDBJ databases">
        <title>Complete genome sequence of Bacillus anthracis Sterne.</title>
        <authorList>
            <person name="Brettin T.S."/>
            <person name="Bruce D."/>
            <person name="Challacombe J.F."/>
            <person name="Gilna P."/>
            <person name="Han C."/>
            <person name="Hill K."/>
            <person name="Hitchcock P."/>
            <person name="Jackson P."/>
            <person name="Keim P."/>
            <person name="Longmire J."/>
            <person name="Lucas S."/>
            <person name="Okinaka R."/>
            <person name="Richardson P."/>
            <person name="Rubin E."/>
            <person name="Tice H."/>
        </authorList>
    </citation>
    <scope>NUCLEOTIDE SEQUENCE [LARGE SCALE GENOMIC DNA]</scope>
    <source>
        <strain>Sterne</strain>
    </source>
</reference>
<reference key="3">
    <citation type="journal article" date="2009" name="J. Bacteriol.">
        <title>The complete genome sequence of Bacillus anthracis Ames 'Ancestor'.</title>
        <authorList>
            <person name="Ravel J."/>
            <person name="Jiang L."/>
            <person name="Stanley S.T."/>
            <person name="Wilson M.R."/>
            <person name="Decker R.S."/>
            <person name="Read T.D."/>
            <person name="Worsham P."/>
            <person name="Keim P.S."/>
            <person name="Salzberg S.L."/>
            <person name="Fraser-Liggett C.M."/>
            <person name="Rasko D.A."/>
        </authorList>
    </citation>
    <scope>NUCLEOTIDE SEQUENCE [LARGE SCALE GENOMIC DNA]</scope>
    <source>
        <strain>Ames ancestor</strain>
    </source>
</reference>
<evidence type="ECO:0000255" key="1">
    <source>
        <dbReference type="HAMAP-Rule" id="MF_01281"/>
    </source>
</evidence>